<reference key="1">
    <citation type="journal article" date="2006" name="Proc. Natl. Acad. Sci. U.S.A.">
        <title>Evolution of sensory complexity recorded in a myxobacterial genome.</title>
        <authorList>
            <person name="Goldman B.S."/>
            <person name="Nierman W.C."/>
            <person name="Kaiser D."/>
            <person name="Slater S.C."/>
            <person name="Durkin A.S."/>
            <person name="Eisen J.A."/>
            <person name="Ronning C.M."/>
            <person name="Barbazuk W.B."/>
            <person name="Blanchard M."/>
            <person name="Field C."/>
            <person name="Halling C."/>
            <person name="Hinkle G."/>
            <person name="Iartchuk O."/>
            <person name="Kim H.S."/>
            <person name="Mackenzie C."/>
            <person name="Madupu R."/>
            <person name="Miller N."/>
            <person name="Shvartsbeyn A."/>
            <person name="Sullivan S.A."/>
            <person name="Vaudin M."/>
            <person name="Wiegand R."/>
            <person name="Kaplan H.B."/>
        </authorList>
    </citation>
    <scope>NUCLEOTIDE SEQUENCE [LARGE SCALE GENOMIC DNA]</scope>
    <source>
        <strain>DK1622</strain>
    </source>
</reference>
<dbReference type="EC" id="1.2.1.70" evidence="1"/>
<dbReference type="EMBL" id="CP000113">
    <property type="protein sequence ID" value="ABF92563.1"/>
    <property type="molecule type" value="Genomic_DNA"/>
</dbReference>
<dbReference type="RefSeq" id="WP_011552725.1">
    <property type="nucleotide sequence ID" value="NC_008095.1"/>
</dbReference>
<dbReference type="SMR" id="Q1D8Z9"/>
<dbReference type="STRING" id="246197.MXAN_2655"/>
<dbReference type="EnsemblBacteria" id="ABF92563">
    <property type="protein sequence ID" value="ABF92563"/>
    <property type="gene ID" value="MXAN_2655"/>
</dbReference>
<dbReference type="GeneID" id="41360031"/>
<dbReference type="KEGG" id="mxa:MXAN_2655"/>
<dbReference type="eggNOG" id="COG0373">
    <property type="taxonomic scope" value="Bacteria"/>
</dbReference>
<dbReference type="HOGENOM" id="CLU_035113_2_2_7"/>
<dbReference type="OrthoDB" id="110209at2"/>
<dbReference type="UniPathway" id="UPA00251">
    <property type="reaction ID" value="UER00316"/>
</dbReference>
<dbReference type="Proteomes" id="UP000002402">
    <property type="component" value="Chromosome"/>
</dbReference>
<dbReference type="GO" id="GO:0008883">
    <property type="term" value="F:glutamyl-tRNA reductase activity"/>
    <property type="evidence" value="ECO:0007669"/>
    <property type="project" value="UniProtKB-UniRule"/>
</dbReference>
<dbReference type="GO" id="GO:0050661">
    <property type="term" value="F:NADP binding"/>
    <property type="evidence" value="ECO:0007669"/>
    <property type="project" value="InterPro"/>
</dbReference>
<dbReference type="GO" id="GO:0019353">
    <property type="term" value="P:protoporphyrinogen IX biosynthetic process from glutamate"/>
    <property type="evidence" value="ECO:0007669"/>
    <property type="project" value="TreeGrafter"/>
</dbReference>
<dbReference type="CDD" id="cd05213">
    <property type="entry name" value="NAD_bind_Glutamyl_tRNA_reduct"/>
    <property type="match status" value="1"/>
</dbReference>
<dbReference type="FunFam" id="3.30.460.30:FF:000001">
    <property type="entry name" value="Glutamyl-tRNA reductase"/>
    <property type="match status" value="1"/>
</dbReference>
<dbReference type="FunFam" id="3.40.50.720:FF:000031">
    <property type="entry name" value="Glutamyl-tRNA reductase"/>
    <property type="match status" value="1"/>
</dbReference>
<dbReference type="Gene3D" id="3.30.460.30">
    <property type="entry name" value="Glutamyl-tRNA reductase, N-terminal domain"/>
    <property type="match status" value="1"/>
</dbReference>
<dbReference type="Gene3D" id="3.40.50.720">
    <property type="entry name" value="NAD(P)-binding Rossmann-like Domain"/>
    <property type="match status" value="1"/>
</dbReference>
<dbReference type="HAMAP" id="MF_00087">
    <property type="entry name" value="Glu_tRNA_reductase"/>
    <property type="match status" value="1"/>
</dbReference>
<dbReference type="InterPro" id="IPR000343">
    <property type="entry name" value="4pyrrol_synth_GluRdtase"/>
</dbReference>
<dbReference type="InterPro" id="IPR015896">
    <property type="entry name" value="4pyrrol_synth_GluRdtase_dimer"/>
</dbReference>
<dbReference type="InterPro" id="IPR015895">
    <property type="entry name" value="4pyrrol_synth_GluRdtase_N"/>
</dbReference>
<dbReference type="InterPro" id="IPR018214">
    <property type="entry name" value="GluRdtase_CS"/>
</dbReference>
<dbReference type="InterPro" id="IPR036453">
    <property type="entry name" value="GluRdtase_dimer_dom_sf"/>
</dbReference>
<dbReference type="InterPro" id="IPR036343">
    <property type="entry name" value="GluRdtase_N_sf"/>
</dbReference>
<dbReference type="InterPro" id="IPR036291">
    <property type="entry name" value="NAD(P)-bd_dom_sf"/>
</dbReference>
<dbReference type="InterPro" id="IPR006151">
    <property type="entry name" value="Shikm_DH/Glu-tRNA_Rdtase"/>
</dbReference>
<dbReference type="NCBIfam" id="TIGR01035">
    <property type="entry name" value="hemA"/>
    <property type="match status" value="1"/>
</dbReference>
<dbReference type="PANTHER" id="PTHR43013">
    <property type="entry name" value="GLUTAMYL-TRNA REDUCTASE"/>
    <property type="match status" value="1"/>
</dbReference>
<dbReference type="PANTHER" id="PTHR43013:SF1">
    <property type="entry name" value="GLUTAMYL-TRNA REDUCTASE"/>
    <property type="match status" value="1"/>
</dbReference>
<dbReference type="Pfam" id="PF00745">
    <property type="entry name" value="GlutR_dimer"/>
    <property type="match status" value="1"/>
</dbReference>
<dbReference type="Pfam" id="PF05201">
    <property type="entry name" value="GlutR_N"/>
    <property type="match status" value="1"/>
</dbReference>
<dbReference type="Pfam" id="PF01488">
    <property type="entry name" value="Shikimate_DH"/>
    <property type="match status" value="1"/>
</dbReference>
<dbReference type="PIRSF" id="PIRSF000445">
    <property type="entry name" value="4pyrrol_synth_GluRdtase"/>
    <property type="match status" value="1"/>
</dbReference>
<dbReference type="SUPFAM" id="SSF69742">
    <property type="entry name" value="Glutamyl tRNA-reductase catalytic, N-terminal domain"/>
    <property type="match status" value="1"/>
</dbReference>
<dbReference type="SUPFAM" id="SSF69075">
    <property type="entry name" value="Glutamyl tRNA-reductase dimerization domain"/>
    <property type="match status" value="1"/>
</dbReference>
<dbReference type="SUPFAM" id="SSF51735">
    <property type="entry name" value="NAD(P)-binding Rossmann-fold domains"/>
    <property type="match status" value="1"/>
</dbReference>
<dbReference type="PROSITE" id="PS00747">
    <property type="entry name" value="GLUTR"/>
    <property type="match status" value="1"/>
</dbReference>
<comment type="function">
    <text evidence="1">Catalyzes the NADPH-dependent reduction of glutamyl-tRNA(Glu) to glutamate 1-semialdehyde (GSA).</text>
</comment>
<comment type="catalytic activity">
    <reaction evidence="1">
        <text>(S)-4-amino-5-oxopentanoate + tRNA(Glu) + NADP(+) = L-glutamyl-tRNA(Glu) + NADPH + H(+)</text>
        <dbReference type="Rhea" id="RHEA:12344"/>
        <dbReference type="Rhea" id="RHEA-COMP:9663"/>
        <dbReference type="Rhea" id="RHEA-COMP:9680"/>
        <dbReference type="ChEBI" id="CHEBI:15378"/>
        <dbReference type="ChEBI" id="CHEBI:57501"/>
        <dbReference type="ChEBI" id="CHEBI:57783"/>
        <dbReference type="ChEBI" id="CHEBI:58349"/>
        <dbReference type="ChEBI" id="CHEBI:78442"/>
        <dbReference type="ChEBI" id="CHEBI:78520"/>
        <dbReference type="EC" id="1.2.1.70"/>
    </reaction>
</comment>
<comment type="pathway">
    <text evidence="1">Porphyrin-containing compound metabolism; protoporphyrin-IX biosynthesis; 5-aminolevulinate from L-glutamyl-tRNA(Glu): step 1/2.</text>
</comment>
<comment type="subunit">
    <text evidence="1">Homodimer.</text>
</comment>
<comment type="domain">
    <text evidence="1">Possesses an unusual extended V-shaped dimeric structure with each monomer consisting of three distinct domains arranged along a curved 'spinal' alpha-helix. The N-terminal catalytic domain specifically recognizes the glutamate moiety of the substrate. The second domain is the NADPH-binding domain, and the third C-terminal domain is responsible for dimerization.</text>
</comment>
<comment type="miscellaneous">
    <text evidence="1">During catalysis, the active site Cys acts as a nucleophile attacking the alpha-carbonyl group of tRNA-bound glutamate with the formation of a thioester intermediate between enzyme and glutamate, and the concomitant release of tRNA(Glu). The thioester intermediate is finally reduced by direct hydride transfer from NADPH, to form the product GSA.</text>
</comment>
<comment type="similarity">
    <text evidence="1">Belongs to the glutamyl-tRNA reductase family.</text>
</comment>
<sequence length="441" mass="46681">MELICIGLSHRTAPLTVRERLALPESRQVDVLQRLAQAPVEALWVSTCNRVEVYLFAPDAAMARQRALMELQVLGGVEALEHLYEHQGEAALVHLFRVACSLDSMVLGEAQILGQVKEAFERGQGAGAVRGELMRACAAAFSCAKRVRTETAIGRAATSMAAAAVQLASKVFDGLAGKTVLVVGAGEMGELAARHLKQAGASKLYVTNRTLSRAEALAAEVGGQARPFEELLGLVAAADVVVCSTASQAPLFTRDNVGALGRGRRGRPLFMVDLAVPRDIDPAVGTLDWVHAYDVDDIQKFVADNAAARAEEAQKAGVLVAQEVARFVKERALREGTPVLARLRQRAEAIARSEVERTLGALGDGLNEKQRKSIEAMGRAIVNKLLHEPTARLRAVGPEGEGNRLAGAAAELFGLLEEEVGTAAAAPSVMAAPVQVATGGK</sequence>
<protein>
    <recommendedName>
        <fullName evidence="1">Glutamyl-tRNA reductase</fullName>
        <shortName evidence="1">GluTR</shortName>
        <ecNumber evidence="1">1.2.1.70</ecNumber>
    </recommendedName>
</protein>
<accession>Q1D8Z9</accession>
<organism>
    <name type="scientific">Myxococcus xanthus (strain DK1622)</name>
    <dbReference type="NCBI Taxonomy" id="246197"/>
    <lineage>
        <taxon>Bacteria</taxon>
        <taxon>Pseudomonadati</taxon>
        <taxon>Myxococcota</taxon>
        <taxon>Myxococcia</taxon>
        <taxon>Myxococcales</taxon>
        <taxon>Cystobacterineae</taxon>
        <taxon>Myxococcaceae</taxon>
        <taxon>Myxococcus</taxon>
    </lineage>
</organism>
<evidence type="ECO:0000255" key="1">
    <source>
        <dbReference type="HAMAP-Rule" id="MF_00087"/>
    </source>
</evidence>
<proteinExistence type="inferred from homology"/>
<keyword id="KW-0521">NADP</keyword>
<keyword id="KW-0560">Oxidoreductase</keyword>
<keyword id="KW-0627">Porphyrin biosynthesis</keyword>
<keyword id="KW-1185">Reference proteome</keyword>
<gene>
    <name evidence="1" type="primary">hemA</name>
    <name type="ordered locus">MXAN_2655</name>
</gene>
<feature type="chain" id="PRO_1000004653" description="Glutamyl-tRNA reductase">
    <location>
        <begin position="1"/>
        <end position="441"/>
    </location>
</feature>
<feature type="active site" description="Nucleophile" evidence="1">
    <location>
        <position position="48"/>
    </location>
</feature>
<feature type="binding site" evidence="1">
    <location>
        <begin position="47"/>
        <end position="50"/>
    </location>
    <ligand>
        <name>substrate</name>
    </ligand>
</feature>
<feature type="binding site" evidence="1">
    <location>
        <position position="104"/>
    </location>
    <ligand>
        <name>substrate</name>
    </ligand>
</feature>
<feature type="binding site" evidence="1">
    <location>
        <begin position="109"/>
        <end position="111"/>
    </location>
    <ligand>
        <name>substrate</name>
    </ligand>
</feature>
<feature type="binding site" evidence="1">
    <location>
        <position position="115"/>
    </location>
    <ligand>
        <name>substrate</name>
    </ligand>
</feature>
<feature type="binding site" evidence="1">
    <location>
        <begin position="184"/>
        <end position="189"/>
    </location>
    <ligand>
        <name>NADP(+)</name>
        <dbReference type="ChEBI" id="CHEBI:58349"/>
    </ligand>
</feature>
<feature type="site" description="Important for activity" evidence="1">
    <location>
        <position position="94"/>
    </location>
</feature>
<name>HEM1_MYXXD</name>